<sequence>MNVKTVKCPSCGKPVPWVPESRYRPFCSERCKQIDLGAWAAEQYTIPVVEEDDLPDAPGNDTSGKLN</sequence>
<keyword id="KW-0479">Metal-binding</keyword>
<keyword id="KW-0862">Zinc</keyword>
<feature type="chain" id="PRO_1000130970" description="DNA gyrase inhibitor YacG">
    <location>
        <begin position="1"/>
        <end position="67"/>
    </location>
</feature>
<feature type="binding site" evidence="1">
    <location>
        <position position="8"/>
    </location>
    <ligand>
        <name>Zn(2+)</name>
        <dbReference type="ChEBI" id="CHEBI:29105"/>
    </ligand>
</feature>
<feature type="binding site" evidence="1">
    <location>
        <position position="11"/>
    </location>
    <ligand>
        <name>Zn(2+)</name>
        <dbReference type="ChEBI" id="CHEBI:29105"/>
    </ligand>
</feature>
<feature type="binding site" evidence="1">
    <location>
        <position position="27"/>
    </location>
    <ligand>
        <name>Zn(2+)</name>
        <dbReference type="ChEBI" id="CHEBI:29105"/>
    </ligand>
</feature>
<feature type="binding site" evidence="1">
    <location>
        <position position="31"/>
    </location>
    <ligand>
        <name>Zn(2+)</name>
        <dbReference type="ChEBI" id="CHEBI:29105"/>
    </ligand>
</feature>
<reference key="1">
    <citation type="submission" date="2008-05" db="EMBL/GenBank/DDBJ databases">
        <title>Complete sequence of chromosome 1 of Ralstonia pickettii 12J.</title>
        <authorList>
            <person name="Lucas S."/>
            <person name="Copeland A."/>
            <person name="Lapidus A."/>
            <person name="Glavina del Rio T."/>
            <person name="Dalin E."/>
            <person name="Tice H."/>
            <person name="Bruce D."/>
            <person name="Goodwin L."/>
            <person name="Pitluck S."/>
            <person name="Meincke L."/>
            <person name="Brettin T."/>
            <person name="Detter J.C."/>
            <person name="Han C."/>
            <person name="Kuske C.R."/>
            <person name="Schmutz J."/>
            <person name="Larimer F."/>
            <person name="Land M."/>
            <person name="Hauser L."/>
            <person name="Kyrpides N."/>
            <person name="Mikhailova N."/>
            <person name="Marsh T."/>
            <person name="Richardson P."/>
        </authorList>
    </citation>
    <scope>NUCLEOTIDE SEQUENCE [LARGE SCALE GENOMIC DNA]</scope>
    <source>
        <strain>12J</strain>
    </source>
</reference>
<accession>B2UCW3</accession>
<evidence type="ECO:0000255" key="1">
    <source>
        <dbReference type="HAMAP-Rule" id="MF_00649"/>
    </source>
</evidence>
<comment type="function">
    <text evidence="1">Inhibits all the catalytic activities of DNA gyrase by preventing its interaction with DNA. Acts by binding directly to the C-terminal domain of GyrB, which probably disrupts DNA binding by the gyrase.</text>
</comment>
<comment type="cofactor">
    <cofactor evidence="1">
        <name>Zn(2+)</name>
        <dbReference type="ChEBI" id="CHEBI:29105"/>
    </cofactor>
    <text evidence="1">Binds 1 zinc ion.</text>
</comment>
<comment type="subunit">
    <text evidence="1">Interacts with GyrB.</text>
</comment>
<comment type="similarity">
    <text evidence="1">Belongs to the DNA gyrase inhibitor YacG family.</text>
</comment>
<protein>
    <recommendedName>
        <fullName evidence="1">DNA gyrase inhibitor YacG</fullName>
    </recommendedName>
</protein>
<name>YACG_RALPJ</name>
<dbReference type="EMBL" id="CP001068">
    <property type="protein sequence ID" value="ACD28198.1"/>
    <property type="molecule type" value="Genomic_DNA"/>
</dbReference>
<dbReference type="SMR" id="B2UCW3"/>
<dbReference type="STRING" id="402626.Rpic_3075"/>
<dbReference type="KEGG" id="rpi:Rpic_3075"/>
<dbReference type="eggNOG" id="COG3024">
    <property type="taxonomic scope" value="Bacteria"/>
</dbReference>
<dbReference type="HOGENOM" id="CLU_178280_3_2_4"/>
<dbReference type="GO" id="GO:0008657">
    <property type="term" value="F:DNA topoisomerase type II (double strand cut, ATP-hydrolyzing) inhibitor activity"/>
    <property type="evidence" value="ECO:0007669"/>
    <property type="project" value="UniProtKB-UniRule"/>
</dbReference>
<dbReference type="GO" id="GO:0008270">
    <property type="term" value="F:zinc ion binding"/>
    <property type="evidence" value="ECO:0007669"/>
    <property type="project" value="UniProtKB-UniRule"/>
</dbReference>
<dbReference type="GO" id="GO:0006355">
    <property type="term" value="P:regulation of DNA-templated transcription"/>
    <property type="evidence" value="ECO:0007669"/>
    <property type="project" value="InterPro"/>
</dbReference>
<dbReference type="Gene3D" id="3.30.50.10">
    <property type="entry name" value="Erythroid Transcription Factor GATA-1, subunit A"/>
    <property type="match status" value="1"/>
</dbReference>
<dbReference type="HAMAP" id="MF_00649">
    <property type="entry name" value="DNA_gyrase_inhibitor_YacG"/>
    <property type="match status" value="1"/>
</dbReference>
<dbReference type="InterPro" id="IPR005584">
    <property type="entry name" value="DNA_gyrase_inhibitor_YacG"/>
</dbReference>
<dbReference type="InterPro" id="IPR013088">
    <property type="entry name" value="Znf_NHR/GATA"/>
</dbReference>
<dbReference type="PANTHER" id="PTHR36150">
    <property type="entry name" value="DNA GYRASE INHIBITOR YACG"/>
    <property type="match status" value="1"/>
</dbReference>
<dbReference type="PANTHER" id="PTHR36150:SF1">
    <property type="entry name" value="DNA GYRASE INHIBITOR YACG"/>
    <property type="match status" value="1"/>
</dbReference>
<dbReference type="Pfam" id="PF03884">
    <property type="entry name" value="YacG"/>
    <property type="match status" value="1"/>
</dbReference>
<dbReference type="SUPFAM" id="SSF57716">
    <property type="entry name" value="Glucocorticoid receptor-like (DNA-binding domain)"/>
    <property type="match status" value="1"/>
</dbReference>
<gene>
    <name evidence="1" type="primary">yacG</name>
    <name type="ordered locus">Rpic_3075</name>
</gene>
<organism>
    <name type="scientific">Ralstonia pickettii (strain 12J)</name>
    <dbReference type="NCBI Taxonomy" id="402626"/>
    <lineage>
        <taxon>Bacteria</taxon>
        <taxon>Pseudomonadati</taxon>
        <taxon>Pseudomonadota</taxon>
        <taxon>Betaproteobacteria</taxon>
        <taxon>Burkholderiales</taxon>
        <taxon>Burkholderiaceae</taxon>
        <taxon>Ralstonia</taxon>
    </lineage>
</organism>
<proteinExistence type="inferred from homology"/>